<protein>
    <recommendedName>
        <fullName>V-type proton ATPase subunit H</fullName>
        <shortName>V-ATPase subunit H</shortName>
    </recommendedName>
    <alternativeName>
        <fullName>Nef-binding protein 1</fullName>
        <shortName>NBP1</shortName>
    </alternativeName>
    <alternativeName>
        <fullName>Protein VMA13 homolog</fullName>
    </alternativeName>
    <alternativeName>
        <fullName>V-ATPase 50/57 kDa subunits</fullName>
    </alternativeName>
    <alternativeName>
        <fullName>Vacuolar proton pump subunit H</fullName>
    </alternativeName>
    <alternativeName>
        <fullName>Vacuolar proton pump subunit SFD</fullName>
    </alternativeName>
</protein>
<comment type="function">
    <text evidence="1 2 3 6">Subunit of the V1 complex of vacuolar(H+)-ATPase (V-ATPase), a multisubunit enzyme composed of a peripheral complex (V1) that hydrolyzes ATP and a membrane integral complex (V0) that translocates protons (PubMed:33065002). V-ATPase is responsible for acidifying and maintaining the pH of intracellular compartments and in some cell types, is targeted to the plasma membrane, where it is responsible for acidifying the extracellular environment (By similarity). Subunit H is essential for V-ATPase activity, but not for the assembly of the complex (By similarity). Involved in the endocytosis mediated by clathrin-coated pits, required for the formation of endosomes (PubMed:12032142).</text>
</comment>
<comment type="subunit">
    <text evidence="3 5 6">V-ATPase is a heteromultimeric enzyme made up of two complexes: the ATP-hydrolytic V1 complex and the proton translocation V0 complex (PubMed:33065002). The V1 complex consists of three catalytic AB heterodimers that form a heterohexamer, three peripheral stalks each consisting of EG heterodimers, one central rotor including subunits D and F, and the regulatory subunits C and H (PubMed:33065002). The proton translocation complex V0 consists of the proton transport subunit a, a ring of proteolipid subunits c9c'', rotary subunit d, subunits e and f, and the accessory subunits ATP6AP1/Ac45 and ATP6AP2/PRR (PubMed:33065002). Interacts with AP2M1 (PubMed:12032142). Interacts with TM9SF4 in colon cancer cells (PubMed:25659576).</text>
</comment>
<comment type="subunit">
    <text evidence="3 7">(Microbial infection) Interacts with HIV-1 Nef protein.</text>
</comment>
<comment type="subunit">
    <text evidence="4">(Microbial infection) Interacts with M.tuberculosis PtpA, which blocks V-ATPase trafficking and phagosome acidification.</text>
</comment>
<comment type="interaction">
    <interactant intactId="EBI-724719">
        <id>Q9UI12</id>
    </interactant>
    <interactant intactId="EBI-18924329">
        <id>Q96IK1-2</id>
        <label>BOD1</label>
    </interactant>
    <organismsDiffer>false</organismsDiffer>
    <experiments>3</experiments>
</comment>
<comment type="interaction">
    <interactant intactId="EBI-724719">
        <id>Q9UI12</id>
    </interactant>
    <interactant intactId="EBI-711280">
        <id>P42772</id>
        <label>CDKN2B</label>
    </interactant>
    <organismsDiffer>false</organismsDiffer>
    <experiments>3</experiments>
</comment>
<comment type="interaction">
    <interactant intactId="EBI-724719">
        <id>Q9UI12</id>
    </interactant>
    <interactant intactId="EBI-11533409">
        <id>Q96Q35-2</id>
        <label>FLACC1</label>
    </interactant>
    <organismsDiffer>false</organismsDiffer>
    <experiments>3</experiments>
</comment>
<comment type="interaction">
    <interactant intactId="EBI-724719">
        <id>Q9UI12</id>
    </interactant>
    <interactant intactId="EBI-466029">
        <id>P42858</id>
        <label>HTT</label>
    </interactant>
    <organismsDiffer>false</organismsDiffer>
    <experiments>3</experiments>
</comment>
<comment type="interaction">
    <interactant intactId="EBI-724719">
        <id>Q9UI12</id>
    </interactant>
    <interactant intactId="EBI-721802">
        <id>Q9BZL4</id>
        <label>PPP1R12C</label>
    </interactant>
    <organismsDiffer>false</organismsDiffer>
    <experiments>3</experiments>
</comment>
<comment type="interaction">
    <interactant intactId="EBI-724719">
        <id>Q9UI12</id>
    </interactant>
    <interactant intactId="EBI-4401902">
        <id>O15079</id>
        <label>SNPH</label>
    </interactant>
    <organismsDiffer>false</organismsDiffer>
    <experiments>3</experiments>
</comment>
<comment type="interaction">
    <interactant intactId="EBI-724719">
        <id>Q9UI12</id>
    </interactant>
    <interactant intactId="EBI-744066">
        <id>Q9UM82</id>
        <label>SPATA2</label>
    </interactant>
    <organismsDiffer>false</organismsDiffer>
    <experiments>3</experiments>
</comment>
<comment type="subcellular location">
    <subcellularLocation>
        <location evidence="1">Cytoplasmic vesicle</location>
        <location evidence="1">Clathrin-coated vesicle membrane</location>
        <topology evidence="9">Peripheral membrane protein</topology>
    </subcellularLocation>
</comment>
<comment type="alternative products">
    <event type="alternative splicing"/>
    <isoform>
        <id>Q9UI12-1</id>
        <name>1</name>
        <sequence type="displayed"/>
    </isoform>
    <isoform>
        <id>Q9UI12-2</id>
        <name>2</name>
        <sequence type="described" ref="VSP_012274"/>
    </isoform>
</comment>
<comment type="tissue specificity">
    <text evidence="7">Widely expressed.</text>
</comment>
<comment type="similarity">
    <text evidence="9">Belongs to the V-ATPase H subunit family.</text>
</comment>
<evidence type="ECO:0000250" key="1">
    <source>
        <dbReference type="UniProtKB" id="O46563"/>
    </source>
</evidence>
<evidence type="ECO:0000250" key="2">
    <source>
        <dbReference type="UniProtKB" id="P41807"/>
    </source>
</evidence>
<evidence type="ECO:0000269" key="3">
    <source>
    </source>
</evidence>
<evidence type="ECO:0000269" key="4">
    <source>
    </source>
</evidence>
<evidence type="ECO:0000269" key="5">
    <source>
    </source>
</evidence>
<evidence type="ECO:0000269" key="6">
    <source>
    </source>
</evidence>
<evidence type="ECO:0000269" key="7">
    <source>
    </source>
</evidence>
<evidence type="ECO:0000303" key="8">
    <source ref="1"/>
</evidence>
<evidence type="ECO:0000305" key="9"/>
<evidence type="ECO:0007744" key="10">
    <source>
        <dbReference type="PDB" id="6WM2"/>
    </source>
</evidence>
<evidence type="ECO:0007744" key="11">
    <source>
        <dbReference type="PDB" id="6WM3"/>
    </source>
</evidence>
<evidence type="ECO:0007744" key="12">
    <source>
        <dbReference type="PDB" id="6WM4"/>
    </source>
</evidence>
<evidence type="ECO:0007744" key="13">
    <source>
    </source>
</evidence>
<evidence type="ECO:0007829" key="14">
    <source>
        <dbReference type="PDB" id="6WM2"/>
    </source>
</evidence>
<evidence type="ECO:0007829" key="15">
    <source>
        <dbReference type="PDB" id="6WM3"/>
    </source>
</evidence>
<keyword id="KW-0002">3D-structure</keyword>
<keyword id="KW-0025">Alternative splicing</keyword>
<keyword id="KW-0968">Cytoplasmic vesicle</keyword>
<keyword id="KW-0945">Host-virus interaction</keyword>
<keyword id="KW-0375">Hydrogen ion transport</keyword>
<keyword id="KW-0406">Ion transport</keyword>
<keyword id="KW-0472">Membrane</keyword>
<keyword id="KW-0597">Phosphoprotein</keyword>
<keyword id="KW-1267">Proteomics identification</keyword>
<keyword id="KW-1185">Reference proteome</keyword>
<keyword id="KW-0813">Transport</keyword>
<accession>Q9UI12</accession>
<accession>B3KMR0</accession>
<accession>Q6PK44</accession>
<accession>Q9H3E3</accession>
<accession>Q9Y300</accession>
<sequence>MTKMDIRGAVDAAVPTNIIAAKAAEVRANKVNWQSYLQGQMISAEDCEFIQRFEMKRSPEEKQEMLQTEGSQCAKTFINLMTHICKEQTVQYILTMVDDMLQENHQRVSIFFDYARCSKNTAWPYFLPMLNRQDPFTVHMAARIIAKLAAWGKELMEGSDLNYYFNWIKTQLSSQKLRGSGVAVETGTVSSSDSSQYVQCVAGCLQLMLRVNEYRFAWVEADGVNCIMGVLSNKCGFQLQYQMIFSIWLLAFSPQMCEHLRRYNIIPVLSDILQESVKEKVTRIILAAFRNFLEKSTERETRQEYALAMIQCKVLKQLENLEQQKYDDEDISEDIKFLLEKLGESVQDLSSFDEYSSELKSGRLEWSPVHKSEKFWRENAVRLNEKNYELLKILTKLLEVSDDPQVLAVAAHDVGEYVRHYPRGKRVIEQLGGKQLVMNHMHHEDQQVRYNALLAVQKLMVHNWEYLGKQLQSEQPQTAAARS</sequence>
<proteinExistence type="evidence at protein level"/>
<organism>
    <name type="scientific">Homo sapiens</name>
    <name type="common">Human</name>
    <dbReference type="NCBI Taxonomy" id="9606"/>
    <lineage>
        <taxon>Eukaryota</taxon>
        <taxon>Metazoa</taxon>
        <taxon>Chordata</taxon>
        <taxon>Craniata</taxon>
        <taxon>Vertebrata</taxon>
        <taxon>Euteleostomi</taxon>
        <taxon>Mammalia</taxon>
        <taxon>Eutheria</taxon>
        <taxon>Euarchontoglires</taxon>
        <taxon>Primates</taxon>
        <taxon>Haplorrhini</taxon>
        <taxon>Catarrhini</taxon>
        <taxon>Hominidae</taxon>
        <taxon>Homo</taxon>
    </lineage>
</organism>
<name>VATH_HUMAN</name>
<gene>
    <name type="primary">ATP6V1H</name>
    <name type="ORF">CGI-11</name>
</gene>
<feature type="chain" id="PRO_0000124193" description="V-type proton ATPase subunit H">
    <location>
        <begin position="1"/>
        <end position="483"/>
    </location>
</feature>
<feature type="modified residue" description="Phosphoserine" evidence="13">
    <location>
        <position position="483"/>
    </location>
</feature>
<feature type="splice variant" id="VSP_012274" description="In isoform 2." evidence="8">
    <location>
        <begin position="176"/>
        <end position="193"/>
    </location>
</feature>
<feature type="sequence conflict" description="In Ref. 4; AAD27720." evidence="9" ref="4">
    <original>M</original>
    <variation>I</variation>
    <location>
        <position position="129"/>
    </location>
</feature>
<feature type="helix" evidence="14">
    <location>
        <begin position="18"/>
        <end position="28"/>
    </location>
</feature>
<feature type="turn" evidence="14">
    <location>
        <begin position="34"/>
        <end position="40"/>
    </location>
</feature>
<feature type="helix" evidence="14">
    <location>
        <begin position="44"/>
        <end position="48"/>
    </location>
</feature>
<feature type="turn" evidence="14">
    <location>
        <begin position="50"/>
        <end position="53"/>
    </location>
</feature>
<feature type="strand" evidence="15">
    <location>
        <begin position="54"/>
        <end position="56"/>
    </location>
</feature>
<feature type="helix" evidence="14">
    <location>
        <begin position="59"/>
        <end position="63"/>
    </location>
</feature>
<feature type="helix" evidence="14">
    <location>
        <begin position="65"/>
        <end position="68"/>
    </location>
</feature>
<feature type="turn" evidence="14">
    <location>
        <begin position="69"/>
        <end position="74"/>
    </location>
</feature>
<feature type="helix" evidence="14">
    <location>
        <begin position="78"/>
        <end position="83"/>
    </location>
</feature>
<feature type="helix" evidence="14">
    <location>
        <begin position="87"/>
        <end position="103"/>
    </location>
</feature>
<feature type="turn" evidence="14">
    <location>
        <begin position="105"/>
        <end position="107"/>
    </location>
</feature>
<feature type="strand" evidence="14">
    <location>
        <begin position="108"/>
        <end position="111"/>
    </location>
</feature>
<feature type="helix" evidence="15">
    <location>
        <begin position="112"/>
        <end position="114"/>
    </location>
</feature>
<feature type="helix" evidence="14">
    <location>
        <begin position="117"/>
        <end position="120"/>
    </location>
</feature>
<feature type="turn" evidence="14">
    <location>
        <begin position="121"/>
        <end position="123"/>
    </location>
</feature>
<feature type="helix" evidence="14">
    <location>
        <begin position="124"/>
        <end position="126"/>
    </location>
</feature>
<feature type="helix" evidence="15">
    <location>
        <begin position="127"/>
        <end position="129"/>
    </location>
</feature>
<feature type="turn" evidence="14">
    <location>
        <begin position="133"/>
        <end position="138"/>
    </location>
</feature>
<feature type="helix" evidence="14">
    <location>
        <begin position="139"/>
        <end position="144"/>
    </location>
</feature>
<feature type="helix" evidence="14">
    <location>
        <begin position="146"/>
        <end position="150"/>
    </location>
</feature>
<feature type="helix" evidence="14">
    <location>
        <begin position="159"/>
        <end position="162"/>
    </location>
</feature>
<feature type="helix" evidence="14">
    <location>
        <begin position="169"/>
        <end position="172"/>
    </location>
</feature>
<feature type="helix" evidence="14">
    <location>
        <begin position="196"/>
        <end position="208"/>
    </location>
</feature>
<feature type="helix" evidence="14">
    <location>
        <begin position="213"/>
        <end position="219"/>
    </location>
</feature>
<feature type="turn" evidence="14">
    <location>
        <begin position="220"/>
        <end position="222"/>
    </location>
</feature>
<feature type="helix" evidence="14">
    <location>
        <begin position="223"/>
        <end position="232"/>
    </location>
</feature>
<feature type="helix" evidence="14">
    <location>
        <begin position="237"/>
        <end position="250"/>
    </location>
</feature>
<feature type="helix" evidence="14">
    <location>
        <begin position="254"/>
        <end position="260"/>
    </location>
</feature>
<feature type="helix" evidence="14">
    <location>
        <begin position="265"/>
        <end position="273"/>
    </location>
</feature>
<feature type="helix" evidence="14">
    <location>
        <begin position="281"/>
        <end position="295"/>
    </location>
</feature>
<feature type="turn" evidence="14">
    <location>
        <begin position="299"/>
        <end position="301"/>
    </location>
</feature>
<feature type="helix" evidence="14">
    <location>
        <begin position="304"/>
        <end position="310"/>
    </location>
</feature>
<feature type="helix" evidence="14">
    <location>
        <begin position="315"/>
        <end position="323"/>
    </location>
</feature>
<feature type="helix" evidence="14">
    <location>
        <begin position="329"/>
        <end position="349"/>
    </location>
</feature>
<feature type="helix" evidence="14">
    <location>
        <begin position="352"/>
        <end position="361"/>
    </location>
</feature>
<feature type="turn" evidence="14">
    <location>
        <begin position="369"/>
        <end position="371"/>
    </location>
</feature>
<feature type="helix" evidence="14">
    <location>
        <begin position="373"/>
        <end position="377"/>
    </location>
</feature>
<feature type="helix" evidence="14">
    <location>
        <begin position="378"/>
        <end position="382"/>
    </location>
</feature>
<feature type="helix" evidence="14">
    <location>
        <begin position="386"/>
        <end position="388"/>
    </location>
</feature>
<feature type="helix" evidence="14">
    <location>
        <begin position="389"/>
        <end position="397"/>
    </location>
</feature>
<feature type="helix" evidence="14">
    <location>
        <begin position="404"/>
        <end position="420"/>
    </location>
</feature>
<feature type="helix" evidence="14">
    <location>
        <begin position="422"/>
        <end position="430"/>
    </location>
</feature>
<feature type="helix" evidence="14">
    <location>
        <begin position="433"/>
        <end position="439"/>
    </location>
</feature>
<feature type="helix" evidence="14">
    <location>
        <begin position="440"/>
        <end position="442"/>
    </location>
</feature>
<feature type="helix" evidence="14">
    <location>
        <begin position="446"/>
        <end position="460"/>
    </location>
</feature>
<dbReference type="EMBL" id="AF113222">
    <property type="protein sequence ID" value="AAG39293.1"/>
    <property type="molecule type" value="mRNA"/>
</dbReference>
<dbReference type="EMBL" id="AF298777">
    <property type="protein sequence ID" value="AAG22809.1"/>
    <property type="molecule type" value="mRNA"/>
</dbReference>
<dbReference type="EMBL" id="AF112204">
    <property type="protein sequence ID" value="AAF17192.1"/>
    <property type="molecule type" value="mRNA"/>
</dbReference>
<dbReference type="EMBL" id="AF132945">
    <property type="protein sequence ID" value="AAD27720.1"/>
    <property type="molecule type" value="mRNA"/>
</dbReference>
<dbReference type="EMBL" id="AK022345">
    <property type="protein sequence ID" value="BAG51072.1"/>
    <property type="molecule type" value="mRNA"/>
</dbReference>
<dbReference type="EMBL" id="CH471068">
    <property type="protein sequence ID" value="EAW86727.1"/>
    <property type="molecule type" value="Genomic_DNA"/>
</dbReference>
<dbReference type="EMBL" id="BC025275">
    <property type="protein sequence ID" value="AAH25275.1"/>
    <property type="molecule type" value="mRNA"/>
</dbReference>
<dbReference type="CCDS" id="CCDS6153.1">
    <molecule id="Q9UI12-1"/>
</dbReference>
<dbReference type="CCDS" id="CCDS6154.1">
    <molecule id="Q9UI12-2"/>
</dbReference>
<dbReference type="RefSeq" id="NP_057025.2">
    <molecule id="Q9UI12-1"/>
    <property type="nucleotide sequence ID" value="NM_015941.3"/>
</dbReference>
<dbReference type="RefSeq" id="NP_998784.1">
    <molecule id="Q9UI12-2"/>
    <property type="nucleotide sequence ID" value="NM_213619.3"/>
</dbReference>
<dbReference type="RefSeq" id="NP_998785.1">
    <molecule id="Q9UI12-1"/>
    <property type="nucleotide sequence ID" value="NM_213620.3"/>
</dbReference>
<dbReference type="RefSeq" id="XP_006716518.1">
    <molecule id="Q9UI12-2"/>
    <property type="nucleotide sequence ID" value="XM_006716455.4"/>
</dbReference>
<dbReference type="RefSeq" id="XP_054216619.1">
    <molecule id="Q9UI12-2"/>
    <property type="nucleotide sequence ID" value="XM_054360644.1"/>
</dbReference>
<dbReference type="PDB" id="6WM2">
    <property type="method" value="EM"/>
    <property type="resolution" value="3.10 A"/>
    <property type="chains" value="P=1-483"/>
</dbReference>
<dbReference type="PDB" id="6WM3">
    <property type="method" value="EM"/>
    <property type="resolution" value="3.40 A"/>
    <property type="chains" value="P=1-483"/>
</dbReference>
<dbReference type="PDB" id="6WM4">
    <property type="method" value="EM"/>
    <property type="resolution" value="3.60 A"/>
    <property type="chains" value="P=1-483"/>
</dbReference>
<dbReference type="PDB" id="7FDA">
    <property type="method" value="EM"/>
    <property type="resolution" value="4.20 A"/>
    <property type="chains" value="P=356-465"/>
</dbReference>
<dbReference type="PDB" id="7FDB">
    <property type="method" value="EM"/>
    <property type="resolution" value="4.80 A"/>
    <property type="chains" value="P=356-465"/>
</dbReference>
<dbReference type="PDB" id="7FDC">
    <property type="method" value="EM"/>
    <property type="resolution" value="6.60 A"/>
    <property type="chains" value="P=356-465"/>
</dbReference>
<dbReference type="PDB" id="7U4T">
    <property type="method" value="EM"/>
    <property type="resolution" value="3.60 A"/>
    <property type="chains" value="P=1-483"/>
</dbReference>
<dbReference type="PDB" id="7UNF">
    <property type="method" value="EM"/>
    <property type="resolution" value="4.08 A"/>
    <property type="chains" value="H=1-483"/>
</dbReference>
<dbReference type="PDBsum" id="6WM2"/>
<dbReference type="PDBsum" id="6WM3"/>
<dbReference type="PDBsum" id="6WM4"/>
<dbReference type="PDBsum" id="7FDA"/>
<dbReference type="PDBsum" id="7FDB"/>
<dbReference type="PDBsum" id="7FDC"/>
<dbReference type="PDBsum" id="7U4T"/>
<dbReference type="PDBsum" id="7UNF"/>
<dbReference type="EMDB" id="EMD-21847"/>
<dbReference type="EMDB" id="EMD-21848"/>
<dbReference type="EMDB" id="EMD-21849"/>
<dbReference type="EMDB" id="EMD-26334"/>
<dbReference type="EMDB" id="EMD-26623"/>
<dbReference type="EMDB" id="EMD-31538"/>
<dbReference type="EMDB" id="EMD-31539"/>
<dbReference type="EMDB" id="EMD-31540"/>
<dbReference type="SMR" id="Q9UI12"/>
<dbReference type="BioGRID" id="119635">
    <property type="interactions" value="169"/>
</dbReference>
<dbReference type="ComplexPortal" id="CPX-2470">
    <property type="entry name" value="Vacuolar proton translocating ATPase complex, ATP6V0A1 variant"/>
</dbReference>
<dbReference type="ComplexPortal" id="CPX-6904">
    <property type="entry name" value="Vacuolar proton translocating ATPase complex, ATP6V0A2 variant"/>
</dbReference>
<dbReference type="ComplexPortal" id="CPX-6905">
    <property type="entry name" value="Vacuolar proton translocating ATPase complex, ATP6V0A3 variant"/>
</dbReference>
<dbReference type="ComplexPortal" id="CPX-6912">
    <property type="entry name" value="Vacuolar proton translocating ATPase complex, ATP6V0A4 variant"/>
</dbReference>
<dbReference type="FunCoup" id="Q9UI12">
    <property type="interactions" value="3629"/>
</dbReference>
<dbReference type="IntAct" id="Q9UI12">
    <property type="interactions" value="104"/>
</dbReference>
<dbReference type="MINT" id="Q9UI12"/>
<dbReference type="STRING" id="9606.ENSP00000352522"/>
<dbReference type="DrugBank" id="DB01133">
    <property type="generic name" value="Tiludronic acid"/>
</dbReference>
<dbReference type="TCDB" id="3.A.2.2.4">
    <property type="family name" value="the h+- or na+-translocating f-type, v-type and a-type atpase (f-atpase) superfamily"/>
</dbReference>
<dbReference type="GlyGen" id="Q9UI12">
    <property type="glycosylation" value="1 site, 1 O-linked glycan (1 site)"/>
</dbReference>
<dbReference type="iPTMnet" id="Q9UI12"/>
<dbReference type="MetOSite" id="Q9UI12"/>
<dbReference type="PhosphoSitePlus" id="Q9UI12"/>
<dbReference type="SwissPalm" id="Q9UI12"/>
<dbReference type="BioMuta" id="ATP6V1H"/>
<dbReference type="DMDM" id="12643371"/>
<dbReference type="jPOST" id="Q9UI12"/>
<dbReference type="MassIVE" id="Q9UI12"/>
<dbReference type="PaxDb" id="9606-ENSP00000352522"/>
<dbReference type="PeptideAtlas" id="Q9UI12"/>
<dbReference type="ProteomicsDB" id="84451">
    <molecule id="Q9UI12-1"/>
</dbReference>
<dbReference type="ProteomicsDB" id="84452">
    <molecule id="Q9UI12-2"/>
</dbReference>
<dbReference type="Pumba" id="Q9UI12"/>
<dbReference type="Antibodypedia" id="4026">
    <property type="antibodies" value="152 antibodies from 25 providers"/>
</dbReference>
<dbReference type="DNASU" id="51606"/>
<dbReference type="Ensembl" id="ENST00000355221.7">
    <molecule id="Q9UI12-2"/>
    <property type="protein sequence ID" value="ENSP00000347359.3"/>
    <property type="gene ID" value="ENSG00000047249.18"/>
</dbReference>
<dbReference type="Ensembl" id="ENST00000359530.7">
    <molecule id="Q9UI12-1"/>
    <property type="protein sequence ID" value="ENSP00000352522.2"/>
    <property type="gene ID" value="ENSG00000047249.18"/>
</dbReference>
<dbReference type="Ensembl" id="ENST00000396774.6">
    <molecule id="Q9UI12-1"/>
    <property type="protein sequence ID" value="ENSP00000379995.2"/>
    <property type="gene ID" value="ENSG00000047249.18"/>
</dbReference>
<dbReference type="GeneID" id="51606"/>
<dbReference type="KEGG" id="hsa:51606"/>
<dbReference type="MANE-Select" id="ENST00000359530.7">
    <property type="protein sequence ID" value="ENSP00000352522.2"/>
    <property type="RefSeq nucleotide sequence ID" value="NM_015941.4"/>
    <property type="RefSeq protein sequence ID" value="NP_057025.2"/>
</dbReference>
<dbReference type="UCSC" id="uc003xrl.5">
    <molecule id="Q9UI12-1"/>
    <property type="organism name" value="human"/>
</dbReference>
<dbReference type="AGR" id="HGNC:18303"/>
<dbReference type="CTD" id="51606"/>
<dbReference type="DisGeNET" id="51606"/>
<dbReference type="GeneCards" id="ATP6V1H"/>
<dbReference type="HGNC" id="HGNC:18303">
    <property type="gene designation" value="ATP6V1H"/>
</dbReference>
<dbReference type="HPA" id="ENSG00000047249">
    <property type="expression patterns" value="Low tissue specificity"/>
</dbReference>
<dbReference type="MIM" id="608861">
    <property type="type" value="gene"/>
</dbReference>
<dbReference type="neXtProt" id="NX_Q9UI12"/>
<dbReference type="OpenTargets" id="ENSG00000047249"/>
<dbReference type="PharmGKB" id="PA38521"/>
<dbReference type="VEuPathDB" id="HostDB:ENSG00000047249"/>
<dbReference type="eggNOG" id="KOG2759">
    <property type="taxonomic scope" value="Eukaryota"/>
</dbReference>
<dbReference type="GeneTree" id="ENSGT00390000003289"/>
<dbReference type="InParanoid" id="Q9UI12"/>
<dbReference type="OMA" id="HSGHLRW"/>
<dbReference type="OrthoDB" id="10263554at2759"/>
<dbReference type="PAN-GO" id="Q9UI12">
    <property type="GO annotations" value="0 GO annotations based on evolutionary models"/>
</dbReference>
<dbReference type="PhylomeDB" id="Q9UI12"/>
<dbReference type="TreeFam" id="TF313488"/>
<dbReference type="BioCyc" id="MetaCyc:HS00586-MONOMER"/>
<dbReference type="PathwayCommons" id="Q9UI12"/>
<dbReference type="Reactome" id="R-HSA-1222556">
    <property type="pathway name" value="ROS and RNS production in phagocytes"/>
</dbReference>
<dbReference type="Reactome" id="R-HSA-167590">
    <property type="pathway name" value="Nef Mediated CD4 Down-regulation"/>
</dbReference>
<dbReference type="Reactome" id="R-HSA-182218">
    <property type="pathway name" value="Nef Mediated CD8 Down-regulation"/>
</dbReference>
<dbReference type="Reactome" id="R-HSA-77387">
    <property type="pathway name" value="Insulin receptor recycling"/>
</dbReference>
<dbReference type="Reactome" id="R-HSA-917977">
    <property type="pathway name" value="Transferrin endocytosis and recycling"/>
</dbReference>
<dbReference type="Reactome" id="R-HSA-9636467">
    <property type="pathway name" value="Blockage of phagosome acidification"/>
</dbReference>
<dbReference type="Reactome" id="R-HSA-9639288">
    <property type="pathway name" value="Amino acids regulate mTORC1"/>
</dbReference>
<dbReference type="Reactome" id="R-HSA-983712">
    <property type="pathway name" value="Ion channel transport"/>
</dbReference>
<dbReference type="Reactome" id="R-HSA-9857377">
    <property type="pathway name" value="Regulation of MITF-M-dependent genes involved in lysosome biogenesis and autophagy"/>
</dbReference>
<dbReference type="SignaLink" id="Q9UI12"/>
<dbReference type="SIGNOR" id="Q9UI12"/>
<dbReference type="BioGRID-ORCS" id="51606">
    <property type="hits" value="671 hits in 1192 CRISPR screens"/>
</dbReference>
<dbReference type="CD-CODE" id="FB4E32DD">
    <property type="entry name" value="Presynaptic clusters and postsynaptic densities"/>
</dbReference>
<dbReference type="ChiTaRS" id="ATP6V1H">
    <property type="organism name" value="human"/>
</dbReference>
<dbReference type="GeneWiki" id="ATP6V1H"/>
<dbReference type="GenomeRNAi" id="51606"/>
<dbReference type="Pharos" id="Q9UI12">
    <property type="development level" value="Tbio"/>
</dbReference>
<dbReference type="PRO" id="PR:Q9UI12"/>
<dbReference type="Proteomes" id="UP000005640">
    <property type="component" value="Chromosome 8"/>
</dbReference>
<dbReference type="RNAct" id="Q9UI12">
    <property type="molecule type" value="protein"/>
</dbReference>
<dbReference type="Bgee" id="ENSG00000047249">
    <property type="expression patterns" value="Expressed in middle temporal gyrus and 202 other cell types or tissues"/>
</dbReference>
<dbReference type="ExpressionAtlas" id="Q9UI12">
    <property type="expression patterns" value="baseline and differential"/>
</dbReference>
<dbReference type="GO" id="GO:0030665">
    <property type="term" value="C:clathrin-coated vesicle membrane"/>
    <property type="evidence" value="ECO:0007669"/>
    <property type="project" value="UniProtKB-SubCell"/>
</dbReference>
<dbReference type="GO" id="GO:0005829">
    <property type="term" value="C:cytosol"/>
    <property type="evidence" value="ECO:0000304"/>
    <property type="project" value="Reactome"/>
</dbReference>
<dbReference type="GO" id="GO:0010008">
    <property type="term" value="C:endosome membrane"/>
    <property type="evidence" value="ECO:0000303"/>
    <property type="project" value="ComplexPortal"/>
</dbReference>
<dbReference type="GO" id="GO:0070062">
    <property type="term" value="C:extracellular exosome"/>
    <property type="evidence" value="ECO:0007005"/>
    <property type="project" value="UniProtKB"/>
</dbReference>
<dbReference type="GO" id="GO:0098850">
    <property type="term" value="C:extrinsic component of synaptic vesicle membrane"/>
    <property type="evidence" value="ECO:0007669"/>
    <property type="project" value="Ensembl"/>
</dbReference>
<dbReference type="GO" id="GO:0000139">
    <property type="term" value="C:Golgi membrane"/>
    <property type="evidence" value="ECO:0000303"/>
    <property type="project" value="ComplexPortal"/>
</dbReference>
<dbReference type="GO" id="GO:0005765">
    <property type="term" value="C:lysosomal membrane"/>
    <property type="evidence" value="ECO:0007005"/>
    <property type="project" value="UniProtKB"/>
</dbReference>
<dbReference type="GO" id="GO:0016020">
    <property type="term" value="C:membrane"/>
    <property type="evidence" value="ECO:0000314"/>
    <property type="project" value="ComplexPortal"/>
</dbReference>
<dbReference type="GO" id="GO:0005886">
    <property type="term" value="C:plasma membrane"/>
    <property type="evidence" value="ECO:0000304"/>
    <property type="project" value="Reactome"/>
</dbReference>
<dbReference type="GO" id="GO:0033176">
    <property type="term" value="C:proton-transporting V-type ATPase complex"/>
    <property type="evidence" value="ECO:0000303"/>
    <property type="project" value="ComplexPortal"/>
</dbReference>
<dbReference type="GO" id="GO:0000221">
    <property type="term" value="C:vacuolar proton-transporting V-type ATPase, V1 domain"/>
    <property type="evidence" value="ECO:0000250"/>
    <property type="project" value="UniProtKB"/>
</dbReference>
<dbReference type="GO" id="GO:0030234">
    <property type="term" value="F:enzyme regulator activity"/>
    <property type="evidence" value="ECO:0000303"/>
    <property type="project" value="UniProtKB"/>
</dbReference>
<dbReference type="GO" id="GO:0046961">
    <property type="term" value="F:proton-transporting ATPase activity, rotational mechanism"/>
    <property type="evidence" value="ECO:0007669"/>
    <property type="project" value="InterPro"/>
</dbReference>
<dbReference type="GO" id="GO:0006897">
    <property type="term" value="P:endocytosis"/>
    <property type="evidence" value="ECO:0000314"/>
    <property type="project" value="UniProtKB"/>
</dbReference>
<dbReference type="GO" id="GO:0048388">
    <property type="term" value="P:endosomal lumen acidification"/>
    <property type="evidence" value="ECO:0000303"/>
    <property type="project" value="ComplexPortal"/>
</dbReference>
<dbReference type="GO" id="GO:0061795">
    <property type="term" value="P:Golgi lumen acidification"/>
    <property type="evidence" value="ECO:0000303"/>
    <property type="project" value="ComplexPortal"/>
</dbReference>
<dbReference type="GO" id="GO:0051452">
    <property type="term" value="P:intracellular pH reduction"/>
    <property type="evidence" value="ECO:0000303"/>
    <property type="project" value="ComplexPortal"/>
</dbReference>
<dbReference type="GO" id="GO:0007042">
    <property type="term" value="P:lysosomal lumen acidification"/>
    <property type="evidence" value="ECO:0000303"/>
    <property type="project" value="ComplexPortal"/>
</dbReference>
<dbReference type="GO" id="GO:1902600">
    <property type="term" value="P:proton transmembrane transport"/>
    <property type="evidence" value="ECO:0000303"/>
    <property type="project" value="UniProtKB"/>
</dbReference>
<dbReference type="GO" id="GO:0016241">
    <property type="term" value="P:regulation of macroautophagy"/>
    <property type="evidence" value="ECO:0000303"/>
    <property type="project" value="ParkinsonsUK-UCL"/>
</dbReference>
<dbReference type="GO" id="GO:0007035">
    <property type="term" value="P:vacuolar acidification"/>
    <property type="evidence" value="ECO:0000303"/>
    <property type="project" value="UniProtKB"/>
</dbReference>
<dbReference type="CDD" id="cd00256">
    <property type="entry name" value="VATPase_H"/>
    <property type="match status" value="1"/>
</dbReference>
<dbReference type="FunFam" id="1.25.10.10:FF:000067">
    <property type="entry name" value="V-type proton ATPase subunit H"/>
    <property type="match status" value="1"/>
</dbReference>
<dbReference type="FunFam" id="1.25.40.150:FF:000001">
    <property type="entry name" value="V-type proton ATPase subunit H"/>
    <property type="match status" value="1"/>
</dbReference>
<dbReference type="Gene3D" id="1.25.10.10">
    <property type="entry name" value="Leucine-rich Repeat Variant"/>
    <property type="match status" value="1"/>
</dbReference>
<dbReference type="Gene3D" id="1.25.40.150">
    <property type="entry name" value="V-type ATPase, subunit H, C-terminal domain"/>
    <property type="match status" value="1"/>
</dbReference>
<dbReference type="InterPro" id="IPR011989">
    <property type="entry name" value="ARM-like"/>
</dbReference>
<dbReference type="InterPro" id="IPR016024">
    <property type="entry name" value="ARM-type_fold"/>
</dbReference>
<dbReference type="InterPro" id="IPR004908">
    <property type="entry name" value="ATPase_V1-cplx_hsu"/>
</dbReference>
<dbReference type="InterPro" id="IPR011987">
    <property type="entry name" value="ATPase_V1-cplx_hsu_C"/>
</dbReference>
<dbReference type="InterPro" id="IPR038497">
    <property type="entry name" value="ATPase_V1-cplx_hsu_C_sf"/>
</dbReference>
<dbReference type="PANTHER" id="PTHR10698">
    <property type="entry name" value="V-TYPE PROTON ATPASE SUBUNIT H"/>
    <property type="match status" value="1"/>
</dbReference>
<dbReference type="PANTHER" id="PTHR10698:SF0">
    <property type="entry name" value="V-TYPE PROTON ATPASE SUBUNIT H"/>
    <property type="match status" value="1"/>
</dbReference>
<dbReference type="Pfam" id="PF11698">
    <property type="entry name" value="V-ATPase_H_C"/>
    <property type="match status" value="1"/>
</dbReference>
<dbReference type="Pfam" id="PF03224">
    <property type="entry name" value="V-ATPase_H_N"/>
    <property type="match status" value="1"/>
</dbReference>
<dbReference type="PIRSF" id="PIRSF032184">
    <property type="entry name" value="ATPase_V1_H"/>
    <property type="match status" value="1"/>
</dbReference>
<dbReference type="SUPFAM" id="SSF48371">
    <property type="entry name" value="ARM repeat"/>
    <property type="match status" value="1"/>
</dbReference>
<reference key="1">
    <citation type="submission" date="1998-12" db="EMBL/GenBank/DDBJ databases">
        <authorList>
            <person name="Liu B."/>
            <person name="Liu Y.Q."/>
            <person name="Wang X.Y."/>
            <person name="Zhao B."/>
            <person name="Sheng H."/>
            <person name="Zhao X.W."/>
            <person name="Liu S."/>
            <person name="Xu Y.Y."/>
            <person name="Ye J."/>
            <person name="Song L."/>
            <person name="Gao Y."/>
            <person name="Zhang C.L."/>
            <person name="Zhang J."/>
            <person name="Wei Y.J."/>
            <person name="Cao H.Q."/>
            <person name="Zhao Y."/>
            <person name="Liu L.S."/>
            <person name="Ding J.F."/>
            <person name="Gao R.L."/>
            <person name="Wu Q.Y."/>
            <person name="Qiang B.Q."/>
            <person name="Yuan J.G."/>
            <person name="Liew C.C."/>
            <person name="Zhao M.S."/>
            <person name="Hui R.T."/>
        </authorList>
    </citation>
    <scope>NUCLEOTIDE SEQUENCE [MRNA] (ISOFORM 2)</scope>
    <source>
        <tissue>Heart</tissue>
    </source>
</reference>
<reference key="2">
    <citation type="journal article" date="1998" name="Immunity">
        <title>Interactions between HIV1 Nef and vacuolar ATPase facilitate the internalization of CD4.</title>
        <authorList>
            <person name="Lu X."/>
            <person name="Yu H."/>
            <person name="Liu S.-H."/>
            <person name="Brodsky F.M."/>
            <person name="Peterlin B.M."/>
        </authorList>
    </citation>
    <scope>NUCLEOTIDE SEQUENCE [MRNA] (ISOFORM 1)</scope>
    <scope>TISSUE SPECIFICITY</scope>
    <scope>INTERACTION WITH HIV-1 NEF (MICROBIAL INFECTION)</scope>
    <source>
        <tissue>B-cell</tissue>
    </source>
</reference>
<reference key="3">
    <citation type="journal article" date="2000" name="Proc. Natl. Acad. Sci. U.S.A.">
        <title>Gene expression profiling in the human hypothalamus-pituitary-adrenal axis and full-length cDNA cloning.</title>
        <authorList>
            <person name="Hu R.-M."/>
            <person name="Han Z.-G."/>
            <person name="Song H.-D."/>
            <person name="Peng Y.-D."/>
            <person name="Huang Q.-H."/>
            <person name="Ren S.-X."/>
            <person name="Gu Y.-J."/>
            <person name="Huang C.-H."/>
            <person name="Li Y.-B."/>
            <person name="Jiang C.-L."/>
            <person name="Fu G."/>
            <person name="Zhang Q.-H."/>
            <person name="Gu B.-W."/>
            <person name="Dai M."/>
            <person name="Mao Y.-F."/>
            <person name="Gao G.-F."/>
            <person name="Rong R."/>
            <person name="Ye M."/>
            <person name="Zhou J."/>
            <person name="Xu S.-H."/>
            <person name="Gu J."/>
            <person name="Shi J.-X."/>
            <person name="Jin W.-R."/>
            <person name="Zhang C.-K."/>
            <person name="Wu T.-M."/>
            <person name="Huang G.-Y."/>
            <person name="Chen Z."/>
            <person name="Chen M.-D."/>
            <person name="Chen J.-L."/>
        </authorList>
    </citation>
    <scope>NUCLEOTIDE SEQUENCE [LARGE SCALE MRNA] (ISOFORM 1)</scope>
    <source>
        <tissue>Hypothalamus</tissue>
    </source>
</reference>
<reference key="4">
    <citation type="journal article" date="2000" name="Genome Res.">
        <title>Identification of novel human genes evolutionarily conserved in Caenorhabditis elegans by comparative proteomics.</title>
        <authorList>
            <person name="Lai C.-H."/>
            <person name="Chou C.-Y."/>
            <person name="Ch'ang L.-Y."/>
            <person name="Liu C.-S."/>
            <person name="Lin W.-C."/>
        </authorList>
    </citation>
    <scope>NUCLEOTIDE SEQUENCE [LARGE SCALE MRNA] (ISOFORM 1)</scope>
</reference>
<reference key="5">
    <citation type="journal article" date="2004" name="Nat. Genet.">
        <title>Complete sequencing and characterization of 21,243 full-length human cDNAs.</title>
        <authorList>
            <person name="Ota T."/>
            <person name="Suzuki Y."/>
            <person name="Nishikawa T."/>
            <person name="Otsuki T."/>
            <person name="Sugiyama T."/>
            <person name="Irie R."/>
            <person name="Wakamatsu A."/>
            <person name="Hayashi K."/>
            <person name="Sato H."/>
            <person name="Nagai K."/>
            <person name="Kimura K."/>
            <person name="Makita H."/>
            <person name="Sekine M."/>
            <person name="Obayashi M."/>
            <person name="Nishi T."/>
            <person name="Shibahara T."/>
            <person name="Tanaka T."/>
            <person name="Ishii S."/>
            <person name="Yamamoto J."/>
            <person name="Saito K."/>
            <person name="Kawai Y."/>
            <person name="Isono Y."/>
            <person name="Nakamura Y."/>
            <person name="Nagahari K."/>
            <person name="Murakami K."/>
            <person name="Yasuda T."/>
            <person name="Iwayanagi T."/>
            <person name="Wagatsuma M."/>
            <person name="Shiratori A."/>
            <person name="Sudo H."/>
            <person name="Hosoiri T."/>
            <person name="Kaku Y."/>
            <person name="Kodaira H."/>
            <person name="Kondo H."/>
            <person name="Sugawara M."/>
            <person name="Takahashi M."/>
            <person name="Kanda K."/>
            <person name="Yokoi T."/>
            <person name="Furuya T."/>
            <person name="Kikkawa E."/>
            <person name="Omura Y."/>
            <person name="Abe K."/>
            <person name="Kamihara K."/>
            <person name="Katsuta N."/>
            <person name="Sato K."/>
            <person name="Tanikawa M."/>
            <person name="Yamazaki M."/>
            <person name="Ninomiya K."/>
            <person name="Ishibashi T."/>
            <person name="Yamashita H."/>
            <person name="Murakawa K."/>
            <person name="Fujimori K."/>
            <person name="Tanai H."/>
            <person name="Kimata M."/>
            <person name="Watanabe M."/>
            <person name="Hiraoka S."/>
            <person name="Chiba Y."/>
            <person name="Ishida S."/>
            <person name="Ono Y."/>
            <person name="Takiguchi S."/>
            <person name="Watanabe S."/>
            <person name="Yosida M."/>
            <person name="Hotuta T."/>
            <person name="Kusano J."/>
            <person name="Kanehori K."/>
            <person name="Takahashi-Fujii A."/>
            <person name="Hara H."/>
            <person name="Tanase T.-O."/>
            <person name="Nomura Y."/>
            <person name="Togiya S."/>
            <person name="Komai F."/>
            <person name="Hara R."/>
            <person name="Takeuchi K."/>
            <person name="Arita M."/>
            <person name="Imose N."/>
            <person name="Musashino K."/>
            <person name="Yuuki H."/>
            <person name="Oshima A."/>
            <person name="Sasaki N."/>
            <person name="Aotsuka S."/>
            <person name="Yoshikawa Y."/>
            <person name="Matsunawa H."/>
            <person name="Ichihara T."/>
            <person name="Shiohata N."/>
            <person name="Sano S."/>
            <person name="Moriya S."/>
            <person name="Momiyama H."/>
            <person name="Satoh N."/>
            <person name="Takami S."/>
            <person name="Terashima Y."/>
            <person name="Suzuki O."/>
            <person name="Nakagawa S."/>
            <person name="Senoh A."/>
            <person name="Mizoguchi H."/>
            <person name="Goto Y."/>
            <person name="Shimizu F."/>
            <person name="Wakebe H."/>
            <person name="Hishigaki H."/>
            <person name="Watanabe T."/>
            <person name="Sugiyama A."/>
            <person name="Takemoto M."/>
            <person name="Kawakami B."/>
            <person name="Yamazaki M."/>
            <person name="Watanabe K."/>
            <person name="Kumagai A."/>
            <person name="Itakura S."/>
            <person name="Fukuzumi Y."/>
            <person name="Fujimori Y."/>
            <person name="Komiyama M."/>
            <person name="Tashiro H."/>
            <person name="Tanigami A."/>
            <person name="Fujiwara T."/>
            <person name="Ono T."/>
            <person name="Yamada K."/>
            <person name="Fujii Y."/>
            <person name="Ozaki K."/>
            <person name="Hirao M."/>
            <person name="Ohmori Y."/>
            <person name="Kawabata A."/>
            <person name="Hikiji T."/>
            <person name="Kobatake N."/>
            <person name="Inagaki H."/>
            <person name="Ikema Y."/>
            <person name="Okamoto S."/>
            <person name="Okitani R."/>
            <person name="Kawakami T."/>
            <person name="Noguchi S."/>
            <person name="Itoh T."/>
            <person name="Shigeta K."/>
            <person name="Senba T."/>
            <person name="Matsumura K."/>
            <person name="Nakajima Y."/>
            <person name="Mizuno T."/>
            <person name="Morinaga M."/>
            <person name="Sasaki M."/>
            <person name="Togashi T."/>
            <person name="Oyama M."/>
            <person name="Hata H."/>
            <person name="Watanabe M."/>
            <person name="Komatsu T."/>
            <person name="Mizushima-Sugano J."/>
            <person name="Satoh T."/>
            <person name="Shirai Y."/>
            <person name="Takahashi Y."/>
            <person name="Nakagawa K."/>
            <person name="Okumura K."/>
            <person name="Nagase T."/>
            <person name="Nomura N."/>
            <person name="Kikuchi H."/>
            <person name="Masuho Y."/>
            <person name="Yamashita R."/>
            <person name="Nakai K."/>
            <person name="Yada T."/>
            <person name="Nakamura Y."/>
            <person name="Ohara O."/>
            <person name="Isogai T."/>
            <person name="Sugano S."/>
        </authorList>
    </citation>
    <scope>NUCLEOTIDE SEQUENCE [LARGE SCALE MRNA] (ISOFORM 1)</scope>
    <source>
        <tissue>Mammary gland</tissue>
    </source>
</reference>
<reference key="6">
    <citation type="submission" date="2005-07" db="EMBL/GenBank/DDBJ databases">
        <authorList>
            <person name="Mural R.J."/>
            <person name="Istrail S."/>
            <person name="Sutton G.G."/>
            <person name="Florea L."/>
            <person name="Halpern A.L."/>
            <person name="Mobarry C.M."/>
            <person name="Lippert R."/>
            <person name="Walenz B."/>
            <person name="Shatkay H."/>
            <person name="Dew I."/>
            <person name="Miller J.R."/>
            <person name="Flanigan M.J."/>
            <person name="Edwards N.J."/>
            <person name="Bolanos R."/>
            <person name="Fasulo D."/>
            <person name="Halldorsson B.V."/>
            <person name="Hannenhalli S."/>
            <person name="Turner R."/>
            <person name="Yooseph S."/>
            <person name="Lu F."/>
            <person name="Nusskern D.R."/>
            <person name="Shue B.C."/>
            <person name="Zheng X.H."/>
            <person name="Zhong F."/>
            <person name="Delcher A.L."/>
            <person name="Huson D.H."/>
            <person name="Kravitz S.A."/>
            <person name="Mouchard L."/>
            <person name="Reinert K."/>
            <person name="Remington K.A."/>
            <person name="Clark A.G."/>
            <person name="Waterman M.S."/>
            <person name="Eichler E.E."/>
            <person name="Adams M.D."/>
            <person name="Hunkapiller M.W."/>
            <person name="Myers E.W."/>
            <person name="Venter J.C."/>
        </authorList>
    </citation>
    <scope>NUCLEOTIDE SEQUENCE [LARGE SCALE GENOMIC DNA]</scope>
</reference>
<reference key="7">
    <citation type="journal article" date="2004" name="Genome Res.">
        <title>The status, quality, and expansion of the NIH full-length cDNA project: the Mammalian Gene Collection (MGC).</title>
        <authorList>
            <consortium name="The MGC Project Team"/>
        </authorList>
    </citation>
    <scope>NUCLEOTIDE SEQUENCE [LARGE SCALE MRNA] (ISOFORM 1)</scope>
    <source>
        <tissue>Eye</tissue>
        <tissue>Lymphoma</tissue>
    </source>
</reference>
<reference key="8">
    <citation type="journal article" date="2002" name="J. Biol. Chem.">
        <title>Subunit H of the V-ATPase binds to the medium chain of adaptor protein complex 2 and connects Nef to the endocytic machinery.</title>
        <authorList>
            <person name="Geyer M."/>
            <person name="Yu H."/>
            <person name="Mandic R."/>
            <person name="Linnemann T."/>
            <person name="Zheng Y.-H."/>
            <person name="Fackler O.T."/>
            <person name="Peterlin B.M."/>
        </authorList>
    </citation>
    <scope>FUNCTION</scope>
    <scope>INTERACTION WITH HIV-1 NEF (MICROBIAL INFECTION) AND AP2M1</scope>
</reference>
<reference key="9">
    <citation type="journal article" date="2008" name="Mol. Cell">
        <title>Kinase-selective enrichment enables quantitative phosphoproteomics of the kinome across the cell cycle.</title>
        <authorList>
            <person name="Daub H."/>
            <person name="Olsen J.V."/>
            <person name="Bairlein M."/>
            <person name="Gnad F."/>
            <person name="Oppermann F.S."/>
            <person name="Korner R."/>
            <person name="Greff Z."/>
            <person name="Keri G."/>
            <person name="Stemmann O."/>
            <person name="Mann M."/>
        </authorList>
    </citation>
    <scope>PHOSPHORYLATION [LARGE SCALE ANALYSIS] AT SER-483</scope>
    <scope>IDENTIFICATION BY MASS SPECTROMETRY [LARGE SCALE ANALYSIS]</scope>
    <source>
        <tissue>Cervix carcinoma</tissue>
    </source>
</reference>
<reference key="10">
    <citation type="journal article" date="2011" name="BMC Syst. Biol.">
        <title>Initial characterization of the human central proteome.</title>
        <authorList>
            <person name="Burkard T.R."/>
            <person name="Planyavsky M."/>
            <person name="Kaupe I."/>
            <person name="Breitwieser F.P."/>
            <person name="Buerckstuemmer T."/>
            <person name="Bennett K.L."/>
            <person name="Superti-Furga G."/>
            <person name="Colinge J."/>
        </authorList>
    </citation>
    <scope>IDENTIFICATION BY MASS SPECTROMETRY [LARGE SCALE ANALYSIS]</scope>
</reference>
<reference key="11">
    <citation type="journal article" date="2011" name="Proc. Natl. Acad. Sci. U.S.A.">
        <title>Mycobacterium tuberculosis protein tyrosine phosphatase (PtpA) excludes host vacuolar-H+-ATPase to inhibit phagosome acidification.</title>
        <authorList>
            <person name="Wong D."/>
            <person name="Bach H."/>
            <person name="Sun J."/>
            <person name="Hmama Z."/>
            <person name="Av-Gay Y."/>
        </authorList>
    </citation>
    <scope>INTERACTION WITH MYCOBACTERIUM TUBERCULOSIS PTPA (MICROBIAL INFECTION)</scope>
</reference>
<reference key="12">
    <citation type="journal article" date="2014" name="J. Proteomics">
        <title>An enzyme assisted RP-RPLC approach for in-depth analysis of human liver phosphoproteome.</title>
        <authorList>
            <person name="Bian Y."/>
            <person name="Song C."/>
            <person name="Cheng K."/>
            <person name="Dong M."/>
            <person name="Wang F."/>
            <person name="Huang J."/>
            <person name="Sun D."/>
            <person name="Wang L."/>
            <person name="Ye M."/>
            <person name="Zou H."/>
        </authorList>
    </citation>
    <scope>IDENTIFICATION BY MASS SPECTROMETRY [LARGE SCALE ANALYSIS]</scope>
    <source>
        <tissue>Liver</tissue>
    </source>
</reference>
<reference key="13">
    <citation type="journal article" date="2015" name="Oncogene">
        <title>TM9SF4 is a novel V-ATPase-interacting protein that modulates tumor pH alterations associated with drug resistance and invasiveness of colon cancer cells.</title>
        <authorList>
            <person name="Lozupone F."/>
            <person name="Borghi M."/>
            <person name="Marzoli F."/>
            <person name="Azzarito T."/>
            <person name="Matarrese P."/>
            <person name="Iessi E."/>
            <person name="Venturi G."/>
            <person name="Meschini S."/>
            <person name="Canitano A."/>
            <person name="Bona R."/>
            <person name="Cara A."/>
            <person name="Fais S."/>
        </authorList>
    </citation>
    <scope>INTERACTION WITH TM9SF4</scope>
</reference>
<reference evidence="10 11 12" key="14">
    <citation type="journal article" date="2020" name="Mol. Cell">
        <title>Structures of a Complete Human V-ATPase Reveal Mechanisms of Its Assembly.</title>
        <authorList>
            <person name="Wang L."/>
            <person name="Wu D."/>
            <person name="Robinson C.V."/>
            <person name="Wu H."/>
            <person name="Fu T.M."/>
        </authorList>
    </citation>
    <scope>STRUCTURE BY ELECTRON MICROSCOPY (3.10 ANGSTROMS)</scope>
    <scope>FUNCTION</scope>
    <scope>IDENTIFICATION IN THE V-ATPASE COMPLEX</scope>
</reference>